<comment type="function">
    <text evidence="1">Low-affinity receptor for leukotrienes including leukotriene B4. Mediates chemotaxis of granulocytes and macrophages. The response is mediated via G-proteins that activate a phosphatidylinositol-calcium second messenger system (By similarity).</text>
</comment>
<comment type="subcellular location">
    <subcellularLocation>
        <location>Cell membrane</location>
        <topology>Multi-pass membrane protein</topology>
    </subcellularLocation>
</comment>
<comment type="similarity">
    <text evidence="3">Belongs to the G-protein coupled receptor 1 family.</text>
</comment>
<dbReference type="EMBL" id="AB052660">
    <property type="protein sequence ID" value="BAB60815.1"/>
    <property type="molecule type" value="mRNA"/>
</dbReference>
<dbReference type="RefSeq" id="NP_446092.1">
    <property type="nucleotide sequence ID" value="NM_053640.2"/>
</dbReference>
<dbReference type="RefSeq" id="XP_008768880.1">
    <property type="nucleotide sequence ID" value="XM_008770658.2"/>
</dbReference>
<dbReference type="SMR" id="Q924U0"/>
<dbReference type="FunCoup" id="Q924U0">
    <property type="interactions" value="84"/>
</dbReference>
<dbReference type="STRING" id="10116.ENSRNOP00000027619"/>
<dbReference type="GlyCosmos" id="Q924U0">
    <property type="glycosylation" value="1 site, No reported glycans"/>
</dbReference>
<dbReference type="GlyGen" id="Q924U0">
    <property type="glycosylation" value="1 site"/>
</dbReference>
<dbReference type="PhosphoSitePlus" id="Q924U0"/>
<dbReference type="PaxDb" id="10116-ENSRNOP00000027619"/>
<dbReference type="Ensembl" id="ENSRNOT00000027619.3">
    <property type="protein sequence ID" value="ENSRNOP00000027619.1"/>
    <property type="gene ID" value="ENSRNOG00000020382.3"/>
</dbReference>
<dbReference type="GeneID" id="114098"/>
<dbReference type="KEGG" id="rno:114098"/>
<dbReference type="UCSC" id="RGD:621029">
    <property type="organism name" value="rat"/>
</dbReference>
<dbReference type="AGR" id="RGD:621029"/>
<dbReference type="CTD" id="56413"/>
<dbReference type="RGD" id="621029">
    <property type="gene designation" value="Ltb4r2"/>
</dbReference>
<dbReference type="eggNOG" id="KOG3656">
    <property type="taxonomic scope" value="Eukaryota"/>
</dbReference>
<dbReference type="GeneTree" id="ENSGT00950000182966"/>
<dbReference type="HOGENOM" id="CLU_009579_8_0_1"/>
<dbReference type="InParanoid" id="Q924U0"/>
<dbReference type="OMA" id="ICEPCHS"/>
<dbReference type="OrthoDB" id="5980579at2759"/>
<dbReference type="PhylomeDB" id="Q924U0"/>
<dbReference type="TreeFam" id="TF330976"/>
<dbReference type="Reactome" id="R-RNO-391906">
    <property type="pathway name" value="Leukotriene receptors"/>
</dbReference>
<dbReference type="Reactome" id="R-RNO-416476">
    <property type="pathway name" value="G alpha (q) signalling events"/>
</dbReference>
<dbReference type="PRO" id="PR:Q924U0"/>
<dbReference type="Proteomes" id="UP000002494">
    <property type="component" value="Chromosome 15"/>
</dbReference>
<dbReference type="Bgee" id="ENSRNOG00000020382">
    <property type="expression patterns" value="Expressed in esophagus and 1 other cell type or tissue"/>
</dbReference>
<dbReference type="GO" id="GO:0016020">
    <property type="term" value="C:membrane"/>
    <property type="evidence" value="ECO:0000266"/>
    <property type="project" value="RGD"/>
</dbReference>
<dbReference type="GO" id="GO:0005654">
    <property type="term" value="C:nucleoplasm"/>
    <property type="evidence" value="ECO:0007669"/>
    <property type="project" value="Ensembl"/>
</dbReference>
<dbReference type="GO" id="GO:0005886">
    <property type="term" value="C:plasma membrane"/>
    <property type="evidence" value="ECO:0000318"/>
    <property type="project" value="GO_Central"/>
</dbReference>
<dbReference type="GO" id="GO:0008528">
    <property type="term" value="F:G protein-coupled peptide receptor activity"/>
    <property type="evidence" value="ECO:0000318"/>
    <property type="project" value="GO_Central"/>
</dbReference>
<dbReference type="GO" id="GO:0001632">
    <property type="term" value="F:leukotriene B4 receptor activity"/>
    <property type="evidence" value="ECO:0000266"/>
    <property type="project" value="RGD"/>
</dbReference>
<dbReference type="GO" id="GO:0051546">
    <property type="term" value="P:keratinocyte migration"/>
    <property type="evidence" value="ECO:0000266"/>
    <property type="project" value="RGD"/>
</dbReference>
<dbReference type="GO" id="GO:0007218">
    <property type="term" value="P:neuropeptide signaling pathway"/>
    <property type="evidence" value="ECO:0000318"/>
    <property type="project" value="GO_Central"/>
</dbReference>
<dbReference type="GO" id="GO:0007165">
    <property type="term" value="P:signal transduction"/>
    <property type="evidence" value="ECO:0000266"/>
    <property type="project" value="RGD"/>
</dbReference>
<dbReference type="FunFam" id="1.20.1070.10:FF:000109">
    <property type="entry name" value="Leukotriene B4 receptor"/>
    <property type="match status" value="1"/>
</dbReference>
<dbReference type="Gene3D" id="1.20.1070.10">
    <property type="entry name" value="Rhodopsin 7-helix transmembrane proteins"/>
    <property type="match status" value="1"/>
</dbReference>
<dbReference type="InterPro" id="IPR000276">
    <property type="entry name" value="GPCR_Rhodpsn"/>
</dbReference>
<dbReference type="InterPro" id="IPR017452">
    <property type="entry name" value="GPCR_Rhodpsn_7TM"/>
</dbReference>
<dbReference type="InterPro" id="IPR003981">
    <property type="entry name" value="Leukotriene_B4_rcpt"/>
</dbReference>
<dbReference type="InterPro" id="IPR003982">
    <property type="entry name" value="Leukotriene_B4_typ-2_rcpt"/>
</dbReference>
<dbReference type="PANTHER" id="PTHR24230">
    <property type="entry name" value="G-PROTEIN COUPLED RECEPTOR"/>
    <property type="match status" value="1"/>
</dbReference>
<dbReference type="PANTHER" id="PTHR24230:SF8">
    <property type="entry name" value="LEUKOTRIENE B4 RECEPTOR 2"/>
    <property type="match status" value="1"/>
</dbReference>
<dbReference type="Pfam" id="PF00001">
    <property type="entry name" value="7tm_1"/>
    <property type="match status" value="1"/>
</dbReference>
<dbReference type="PRINTS" id="PR00237">
    <property type="entry name" value="GPCRRHODOPSN"/>
</dbReference>
<dbReference type="PRINTS" id="PR01478">
    <property type="entry name" value="LTB2RECEPTOR"/>
</dbReference>
<dbReference type="PRINTS" id="PR01476">
    <property type="entry name" value="LTBRECEPTOR"/>
</dbReference>
<dbReference type="SUPFAM" id="SSF81321">
    <property type="entry name" value="Family A G protein-coupled receptor-like"/>
    <property type="match status" value="1"/>
</dbReference>
<dbReference type="PROSITE" id="PS50262">
    <property type="entry name" value="G_PROTEIN_RECEP_F1_2"/>
    <property type="match status" value="1"/>
</dbReference>
<sequence length="358" mass="37899">MSVCYRPPGNETLLSWKGSRATGTAFLLLAALLGLPGNGFVVWSLAGWRPTAGRPLAATLVLHLALADGAVLLLTPLFVAFLSRQAWPLGQVGCKAVYYVCALSMYASVLLTGLLSLQRCLAVTRPFLAPRLRSPALARRLLLGVWLAALVLAVPAAVYRHLWGDRVCQLCHPSAVHAAAHLSLETLTAFVLPFGTVLGCYGVTLARLRGARWGSGRQGTRVGRLVSAIVLAFGLLWAPYHAVNLLQAVAALAPPEGPLARLGGAGQAARAGTTALAFFSSSVNPVLYVFTAGDLLPRAGPRFLTRLFEGSGEARVGSRSREGTMELRTTPRLKVVGQGRGYGDPGGGGRMEKDSQEW</sequence>
<gene>
    <name type="primary">Ltb4r2</name>
</gene>
<organism>
    <name type="scientific">Rattus norvegicus</name>
    <name type="common">Rat</name>
    <dbReference type="NCBI Taxonomy" id="10116"/>
    <lineage>
        <taxon>Eukaryota</taxon>
        <taxon>Metazoa</taxon>
        <taxon>Chordata</taxon>
        <taxon>Craniata</taxon>
        <taxon>Vertebrata</taxon>
        <taxon>Euteleostomi</taxon>
        <taxon>Mammalia</taxon>
        <taxon>Eutheria</taxon>
        <taxon>Euarchontoglires</taxon>
        <taxon>Glires</taxon>
        <taxon>Rodentia</taxon>
        <taxon>Myomorpha</taxon>
        <taxon>Muroidea</taxon>
        <taxon>Muridae</taxon>
        <taxon>Murinae</taxon>
        <taxon>Rattus</taxon>
    </lineage>
</organism>
<protein>
    <recommendedName>
        <fullName>Leukotriene B4 receptor 2</fullName>
        <shortName>LTB4-R 2</shortName>
        <shortName>LTB4-R2</shortName>
    </recommendedName>
    <alternativeName>
        <fullName>LTB4 receptor JULF2</fullName>
    </alternativeName>
</protein>
<evidence type="ECO:0000250" key="1"/>
<evidence type="ECO:0000255" key="2"/>
<evidence type="ECO:0000255" key="3">
    <source>
        <dbReference type="PROSITE-ProRule" id="PRU00521"/>
    </source>
</evidence>
<evidence type="ECO:0000256" key="4">
    <source>
        <dbReference type="SAM" id="MobiDB-lite"/>
    </source>
</evidence>
<name>LT4R2_RAT</name>
<proteinExistence type="evidence at transcript level"/>
<reference key="1">
    <citation type="journal article" date="2000" name="J. Biol. Chem.">
        <title>Molecular cloning and characterization of another leukotriene B4 receptor.</title>
        <authorList>
            <person name="Kamohara M."/>
            <person name="Takasaki J."/>
            <person name="Matsumoto M."/>
            <person name="Saito T."/>
            <person name="Ohishi T."/>
            <person name="Ishii H."/>
            <person name="Furuichi K."/>
        </authorList>
    </citation>
    <scope>NUCLEOTIDE SEQUENCE [MRNA]</scope>
</reference>
<accession>Q924U0</accession>
<feature type="chain" id="PRO_0000069713" description="Leukotriene B4 receptor 2">
    <location>
        <begin position="1"/>
        <end position="358"/>
    </location>
</feature>
<feature type="topological domain" description="Extracellular" evidence="2">
    <location>
        <begin position="1"/>
        <end position="24"/>
    </location>
</feature>
<feature type="transmembrane region" description="Helical; Name=1" evidence="2">
    <location>
        <begin position="25"/>
        <end position="45"/>
    </location>
</feature>
<feature type="topological domain" description="Cytoplasmic" evidence="2">
    <location>
        <begin position="46"/>
        <end position="60"/>
    </location>
</feature>
<feature type="transmembrane region" description="Helical; Name=2" evidence="2">
    <location>
        <begin position="61"/>
        <end position="81"/>
    </location>
</feature>
<feature type="topological domain" description="Extracellular" evidence="2">
    <location>
        <begin position="82"/>
        <end position="96"/>
    </location>
</feature>
<feature type="transmembrane region" description="Helical; Name=3" evidence="2">
    <location>
        <begin position="97"/>
        <end position="117"/>
    </location>
</feature>
<feature type="topological domain" description="Cytoplasmic" evidence="2">
    <location>
        <begin position="118"/>
        <end position="140"/>
    </location>
</feature>
<feature type="transmembrane region" description="Helical; Name=4" evidence="2">
    <location>
        <begin position="141"/>
        <end position="161"/>
    </location>
</feature>
<feature type="topological domain" description="Extracellular" evidence="2">
    <location>
        <begin position="162"/>
        <end position="185"/>
    </location>
</feature>
<feature type="transmembrane region" description="Helical; Name=5" evidence="2">
    <location>
        <begin position="186"/>
        <end position="206"/>
    </location>
</feature>
<feature type="topological domain" description="Cytoplasmic" evidence="2">
    <location>
        <begin position="207"/>
        <end position="225"/>
    </location>
</feature>
<feature type="transmembrane region" description="Helical; Name=6" evidence="2">
    <location>
        <begin position="226"/>
        <end position="246"/>
    </location>
</feature>
<feature type="topological domain" description="Extracellular" evidence="2">
    <location>
        <begin position="247"/>
        <end position="275"/>
    </location>
</feature>
<feature type="transmembrane region" description="Helical; Name=7" evidence="2">
    <location>
        <begin position="276"/>
        <end position="296"/>
    </location>
</feature>
<feature type="topological domain" description="Cytoplasmic" evidence="2">
    <location>
        <begin position="297"/>
        <end position="358"/>
    </location>
</feature>
<feature type="region of interest" description="Disordered" evidence="4">
    <location>
        <begin position="315"/>
        <end position="358"/>
    </location>
</feature>
<feature type="compositionally biased region" description="Gly residues" evidence="4">
    <location>
        <begin position="338"/>
        <end position="349"/>
    </location>
</feature>
<feature type="glycosylation site" description="N-linked (GlcNAc...) asparagine" evidence="2">
    <location>
        <position position="10"/>
    </location>
</feature>
<keyword id="KW-1003">Cell membrane</keyword>
<keyword id="KW-0297">G-protein coupled receptor</keyword>
<keyword id="KW-0325">Glycoprotein</keyword>
<keyword id="KW-0472">Membrane</keyword>
<keyword id="KW-0675">Receptor</keyword>
<keyword id="KW-1185">Reference proteome</keyword>
<keyword id="KW-0807">Transducer</keyword>
<keyword id="KW-0812">Transmembrane</keyword>
<keyword id="KW-1133">Transmembrane helix</keyword>